<organism>
    <name type="scientific">Arabidopsis thaliana</name>
    <name type="common">Mouse-ear cress</name>
    <dbReference type="NCBI Taxonomy" id="3702"/>
    <lineage>
        <taxon>Eukaryota</taxon>
        <taxon>Viridiplantae</taxon>
        <taxon>Streptophyta</taxon>
        <taxon>Embryophyta</taxon>
        <taxon>Tracheophyta</taxon>
        <taxon>Spermatophyta</taxon>
        <taxon>Magnoliopsida</taxon>
        <taxon>eudicotyledons</taxon>
        <taxon>Gunneridae</taxon>
        <taxon>Pentapetalae</taxon>
        <taxon>rosids</taxon>
        <taxon>malvids</taxon>
        <taxon>Brassicales</taxon>
        <taxon>Brassicaceae</taxon>
        <taxon>Camelineae</taxon>
        <taxon>Arabidopsis</taxon>
    </lineage>
</organism>
<comment type="function">
    <text evidence="3 4 5">Catalyzes the omega-hydroxylation of various fatty acids (FA). Acts on saturated and unsaturated fatty acids with chain lengths from C12 to C18. Plays a major role in the biosynthesis of extracellular lipids. Involved in the biosynthesis of hydroxylated fatty acids required for cutin biosynthesis, cuticle development and repression of bacterial type III gene expression.</text>
</comment>
<comment type="catalytic activity">
    <reaction>
        <text>an organic molecule + reduced [NADPH--hemoprotein reductase] + O2 = an alcohol + oxidized [NADPH--hemoprotein reductase] + H2O + H(+)</text>
        <dbReference type="Rhea" id="RHEA:17149"/>
        <dbReference type="Rhea" id="RHEA-COMP:11964"/>
        <dbReference type="Rhea" id="RHEA-COMP:11965"/>
        <dbReference type="ChEBI" id="CHEBI:15377"/>
        <dbReference type="ChEBI" id="CHEBI:15378"/>
        <dbReference type="ChEBI" id="CHEBI:15379"/>
        <dbReference type="ChEBI" id="CHEBI:30879"/>
        <dbReference type="ChEBI" id="CHEBI:57618"/>
        <dbReference type="ChEBI" id="CHEBI:58210"/>
        <dbReference type="ChEBI" id="CHEBI:142491"/>
        <dbReference type="EC" id="1.14.14.1"/>
    </reaction>
</comment>
<comment type="cofactor">
    <cofactor evidence="1">
        <name>heme</name>
        <dbReference type="ChEBI" id="CHEBI:30413"/>
    </cofactor>
</comment>
<comment type="subcellular location">
    <subcellularLocation>
        <location evidence="8">Membrane</location>
        <topology evidence="8">Single-pass membrane protein</topology>
    </subcellularLocation>
</comment>
<comment type="tissue specificity">
    <text evidence="4 7">Expressed in leaves, stems, flowers and siliques. Expressed at low levels in roots. Expressed in guard cells of cotyledons and leaves.</text>
</comment>
<comment type="developmental stage">
    <text evidence="6">Expressed in the seed coat inner integument layer facing the endosperm in the stages from globular to torpedo embryo.</text>
</comment>
<comment type="induction">
    <text evidence="4 7">By abscisic acid (ABA), auxin, wounding and drought, and in etiolated and dark-adapted seedlings.</text>
</comment>
<comment type="disruption phenotype">
    <text evidence="3">No visible phenotype under normal growth conditions, but mutant plants have reduced content of cutin, loose cuticle membrane ultrastructure, show increased permeability to water vapor and display enhanced disease severity to a virulent strain of the bacterial pathogen P.syringae.</text>
</comment>
<comment type="similarity">
    <text evidence="8">Belongs to the cytochrome P450 family.</text>
</comment>
<feature type="chain" id="PRO_0000052176" description="Cytochrome P450 86A2">
    <location>
        <begin position="1"/>
        <end position="553"/>
    </location>
</feature>
<feature type="transmembrane region" description="Helical" evidence="2">
    <location>
        <begin position="2"/>
        <end position="20"/>
    </location>
</feature>
<feature type="binding site" description="axial binding residue" evidence="1">
    <location>
        <position position="459"/>
    </location>
    <ligand>
        <name>heme</name>
        <dbReference type="ChEBI" id="CHEBI:30413"/>
    </ligand>
    <ligandPart>
        <name>Fe</name>
        <dbReference type="ChEBI" id="CHEBI:18248"/>
    </ligandPart>
</feature>
<feature type="mutagenesis site" description="In cyp86a2-1; reduction of fatty acids in the cuticle membrane." evidence="3">
    <original>R</original>
    <variation>C</variation>
    <location>
        <position position="309"/>
    </location>
</feature>
<feature type="sequence conflict" description="In Ref. 4; AAM91369/AAL75903." evidence="8" ref="4">
    <original>K</original>
    <variation>E</variation>
    <location>
        <position position="489"/>
    </location>
</feature>
<sequence length="553" mass="62530">MDVSNTMLLVAVVAAYWLWFQRISRWLKGPRVWPVLGSLPGLIEQRDRMHDWITENLRACGGTYQTCICAVPFLAKKQGLVTVTCDPKNIEHMLKTRFDNYPKGPTWQAVFHDFLGQGIFNSDGDTWLFQRKTAALEFTTRTLRQAMGRWVNRGIKLRFCPILETAQNNYEPVDLQDLILRLTFDNICGLAFGKDTRTCAPGLPENGFASAFDRATEASLQRFILPEFLWRLKKWLGLGLEVSLSRSLGEIDGYLDAVINTRKQELLSQRESGVQRHDDLLSRFMKKKDQSYSETFLRHVALNFILAGRDTSSVALSWFFWLITTHPTVEDKIVREICSVLIETRGTDVSSWTAEPLEFDEVDRLVYLKAALSETLRLYPSVPEDSKHVVNDDILPDGTFVPAGSSVTYSIYAAGRMKSTWGEDCLEFKPERWISPDDGKFVNHDQYRFVAFNAGPRICLGKDLAYLQMKTIAAAVLLRHRLTVAPGHKVEQKMSLTLFMKNGLLVNVHKRDLEVMMKSLVPKERNDVVVLNGKCNGGIGEGVAVNAAVAVAV</sequence>
<accession>O23066</accession>
<accession>Q8S9L1</accession>
<reference key="1">
    <citation type="submission" date="1997-07" db="EMBL/GenBank/DDBJ databases">
        <authorList>
            <person name="Andrews S."/>
        </authorList>
    </citation>
    <scope>NUCLEOTIDE SEQUENCE [GENOMIC DNA]</scope>
    <source>
        <strain>cv. Columbia</strain>
    </source>
</reference>
<reference key="2">
    <citation type="journal article" date="1999" name="Nature">
        <title>Sequence and analysis of chromosome 4 of the plant Arabidopsis thaliana.</title>
        <authorList>
            <person name="Mayer K.F.X."/>
            <person name="Schueller C."/>
            <person name="Wambutt R."/>
            <person name="Murphy G."/>
            <person name="Volckaert G."/>
            <person name="Pohl T."/>
            <person name="Duesterhoeft A."/>
            <person name="Stiekema W."/>
            <person name="Entian K.-D."/>
            <person name="Terryn N."/>
            <person name="Harris B."/>
            <person name="Ansorge W."/>
            <person name="Brandt P."/>
            <person name="Grivell L.A."/>
            <person name="Rieger M."/>
            <person name="Weichselgartner M."/>
            <person name="de Simone V."/>
            <person name="Obermaier B."/>
            <person name="Mache R."/>
            <person name="Mueller M."/>
            <person name="Kreis M."/>
            <person name="Delseny M."/>
            <person name="Puigdomenech P."/>
            <person name="Watson M."/>
            <person name="Schmidtheini T."/>
            <person name="Reichert B."/>
            <person name="Portetelle D."/>
            <person name="Perez-Alonso M."/>
            <person name="Boutry M."/>
            <person name="Bancroft I."/>
            <person name="Vos P."/>
            <person name="Hoheisel J."/>
            <person name="Zimmermann W."/>
            <person name="Wedler H."/>
            <person name="Ridley P."/>
            <person name="Langham S.-A."/>
            <person name="McCullagh B."/>
            <person name="Bilham L."/>
            <person name="Robben J."/>
            <person name="van der Schueren J."/>
            <person name="Grymonprez B."/>
            <person name="Chuang Y.-J."/>
            <person name="Vandenbussche F."/>
            <person name="Braeken M."/>
            <person name="Weltjens I."/>
            <person name="Voet M."/>
            <person name="Bastiaens I."/>
            <person name="Aert R."/>
            <person name="Defoor E."/>
            <person name="Weitzenegger T."/>
            <person name="Bothe G."/>
            <person name="Ramsperger U."/>
            <person name="Hilbert H."/>
            <person name="Braun M."/>
            <person name="Holzer E."/>
            <person name="Brandt A."/>
            <person name="Peters S."/>
            <person name="van Staveren M."/>
            <person name="Dirkse W."/>
            <person name="Mooijman P."/>
            <person name="Klein Lankhorst R."/>
            <person name="Rose M."/>
            <person name="Hauf J."/>
            <person name="Koetter P."/>
            <person name="Berneiser S."/>
            <person name="Hempel S."/>
            <person name="Feldpausch M."/>
            <person name="Lamberth S."/>
            <person name="Van den Daele H."/>
            <person name="De Keyser A."/>
            <person name="Buysshaert C."/>
            <person name="Gielen J."/>
            <person name="Villarroel R."/>
            <person name="De Clercq R."/>
            <person name="van Montagu M."/>
            <person name="Rogers J."/>
            <person name="Cronin A."/>
            <person name="Quail M.A."/>
            <person name="Bray-Allen S."/>
            <person name="Clark L."/>
            <person name="Doggett J."/>
            <person name="Hall S."/>
            <person name="Kay M."/>
            <person name="Lennard N."/>
            <person name="McLay K."/>
            <person name="Mayes R."/>
            <person name="Pettett A."/>
            <person name="Rajandream M.A."/>
            <person name="Lyne M."/>
            <person name="Benes V."/>
            <person name="Rechmann S."/>
            <person name="Borkova D."/>
            <person name="Bloecker H."/>
            <person name="Scharfe M."/>
            <person name="Grimm M."/>
            <person name="Loehnert T.-H."/>
            <person name="Dose S."/>
            <person name="de Haan M."/>
            <person name="Maarse A.C."/>
            <person name="Schaefer M."/>
            <person name="Mueller-Auer S."/>
            <person name="Gabel C."/>
            <person name="Fuchs M."/>
            <person name="Fartmann B."/>
            <person name="Granderath K."/>
            <person name="Dauner D."/>
            <person name="Herzl A."/>
            <person name="Neumann S."/>
            <person name="Argiriou A."/>
            <person name="Vitale D."/>
            <person name="Liguori R."/>
            <person name="Piravandi E."/>
            <person name="Massenet O."/>
            <person name="Quigley F."/>
            <person name="Clabauld G."/>
            <person name="Muendlein A."/>
            <person name="Felber R."/>
            <person name="Schnabl S."/>
            <person name="Hiller R."/>
            <person name="Schmidt W."/>
            <person name="Lecharny A."/>
            <person name="Aubourg S."/>
            <person name="Chefdor F."/>
            <person name="Cooke R."/>
            <person name="Berger C."/>
            <person name="Monfort A."/>
            <person name="Casacuberta E."/>
            <person name="Gibbons T."/>
            <person name="Weber N."/>
            <person name="Vandenbol M."/>
            <person name="Bargues M."/>
            <person name="Terol J."/>
            <person name="Torres A."/>
            <person name="Perez-Perez A."/>
            <person name="Purnelle B."/>
            <person name="Bent E."/>
            <person name="Johnson S."/>
            <person name="Tacon D."/>
            <person name="Jesse T."/>
            <person name="Heijnen L."/>
            <person name="Schwarz S."/>
            <person name="Scholler P."/>
            <person name="Heber S."/>
            <person name="Francs P."/>
            <person name="Bielke C."/>
            <person name="Frishman D."/>
            <person name="Haase D."/>
            <person name="Lemcke K."/>
            <person name="Mewes H.-W."/>
            <person name="Stocker S."/>
            <person name="Zaccaria P."/>
            <person name="Bevan M."/>
            <person name="Wilson R.K."/>
            <person name="de la Bastide M."/>
            <person name="Habermann K."/>
            <person name="Parnell L."/>
            <person name="Dedhia N."/>
            <person name="Gnoj L."/>
            <person name="Schutz K."/>
            <person name="Huang E."/>
            <person name="Spiegel L."/>
            <person name="Sekhon M."/>
            <person name="Murray J."/>
            <person name="Sheet P."/>
            <person name="Cordes M."/>
            <person name="Abu-Threideh J."/>
            <person name="Stoneking T."/>
            <person name="Kalicki J."/>
            <person name="Graves T."/>
            <person name="Harmon G."/>
            <person name="Edwards J."/>
            <person name="Latreille P."/>
            <person name="Courtney L."/>
            <person name="Cloud J."/>
            <person name="Abbott A."/>
            <person name="Scott K."/>
            <person name="Johnson D."/>
            <person name="Minx P."/>
            <person name="Bentley D."/>
            <person name="Fulton B."/>
            <person name="Miller N."/>
            <person name="Greco T."/>
            <person name="Kemp K."/>
            <person name="Kramer J."/>
            <person name="Fulton L."/>
            <person name="Mardis E."/>
            <person name="Dante M."/>
            <person name="Pepin K."/>
            <person name="Hillier L.W."/>
            <person name="Nelson J."/>
            <person name="Spieth J."/>
            <person name="Ryan E."/>
            <person name="Andrews S."/>
            <person name="Geisel C."/>
            <person name="Layman D."/>
            <person name="Du H."/>
            <person name="Ali J."/>
            <person name="Berghoff A."/>
            <person name="Jones K."/>
            <person name="Drone K."/>
            <person name="Cotton M."/>
            <person name="Joshu C."/>
            <person name="Antonoiu B."/>
            <person name="Zidanic M."/>
            <person name="Strong C."/>
            <person name="Sun H."/>
            <person name="Lamar B."/>
            <person name="Yordan C."/>
            <person name="Ma P."/>
            <person name="Zhong J."/>
            <person name="Preston R."/>
            <person name="Vil D."/>
            <person name="Shekher M."/>
            <person name="Matero A."/>
            <person name="Shah R."/>
            <person name="Swaby I.K."/>
            <person name="O'Shaughnessy A."/>
            <person name="Rodriguez M."/>
            <person name="Hoffman J."/>
            <person name="Till S."/>
            <person name="Granat S."/>
            <person name="Shohdy N."/>
            <person name="Hasegawa A."/>
            <person name="Hameed A."/>
            <person name="Lodhi M."/>
            <person name="Johnson A."/>
            <person name="Chen E."/>
            <person name="Marra M.A."/>
            <person name="Martienssen R."/>
            <person name="McCombie W.R."/>
        </authorList>
    </citation>
    <scope>NUCLEOTIDE SEQUENCE [LARGE SCALE GENOMIC DNA]</scope>
    <source>
        <strain>cv. Columbia</strain>
    </source>
</reference>
<reference key="3">
    <citation type="journal article" date="2017" name="Plant J.">
        <title>Araport11: a complete reannotation of the Arabidopsis thaliana reference genome.</title>
        <authorList>
            <person name="Cheng C.Y."/>
            <person name="Krishnakumar V."/>
            <person name="Chan A.P."/>
            <person name="Thibaud-Nissen F."/>
            <person name="Schobel S."/>
            <person name="Town C.D."/>
        </authorList>
    </citation>
    <scope>GENOME REANNOTATION</scope>
    <source>
        <strain>cv. Columbia</strain>
    </source>
</reference>
<reference key="4">
    <citation type="journal article" date="2003" name="Science">
        <title>Empirical analysis of transcriptional activity in the Arabidopsis genome.</title>
        <authorList>
            <person name="Yamada K."/>
            <person name="Lim J."/>
            <person name="Dale J.M."/>
            <person name="Chen H."/>
            <person name="Shinn P."/>
            <person name="Palm C.J."/>
            <person name="Southwick A.M."/>
            <person name="Wu H.C."/>
            <person name="Kim C.J."/>
            <person name="Nguyen M."/>
            <person name="Pham P.K."/>
            <person name="Cheuk R.F."/>
            <person name="Karlin-Newmann G."/>
            <person name="Liu S.X."/>
            <person name="Lam B."/>
            <person name="Sakano H."/>
            <person name="Wu T."/>
            <person name="Yu G."/>
            <person name="Miranda M."/>
            <person name="Quach H.L."/>
            <person name="Tripp M."/>
            <person name="Chang C.H."/>
            <person name="Lee J.M."/>
            <person name="Toriumi M.J."/>
            <person name="Chan M.M."/>
            <person name="Tang C.C."/>
            <person name="Onodera C.S."/>
            <person name="Deng J.M."/>
            <person name="Akiyama K."/>
            <person name="Ansari Y."/>
            <person name="Arakawa T."/>
            <person name="Banh J."/>
            <person name="Banno F."/>
            <person name="Bowser L."/>
            <person name="Brooks S.Y."/>
            <person name="Carninci P."/>
            <person name="Chao Q."/>
            <person name="Choy N."/>
            <person name="Enju A."/>
            <person name="Goldsmith A.D."/>
            <person name="Gurjal M."/>
            <person name="Hansen N.F."/>
            <person name="Hayashizaki Y."/>
            <person name="Johnson-Hopson C."/>
            <person name="Hsuan V.W."/>
            <person name="Iida K."/>
            <person name="Karnes M."/>
            <person name="Khan S."/>
            <person name="Koesema E."/>
            <person name="Ishida J."/>
            <person name="Jiang P.X."/>
            <person name="Jones T."/>
            <person name="Kawai J."/>
            <person name="Kamiya A."/>
            <person name="Meyers C."/>
            <person name="Nakajima M."/>
            <person name="Narusaka M."/>
            <person name="Seki M."/>
            <person name="Sakurai T."/>
            <person name="Satou M."/>
            <person name="Tamse R."/>
            <person name="Vaysberg M."/>
            <person name="Wallender E.K."/>
            <person name="Wong C."/>
            <person name="Yamamura Y."/>
            <person name="Yuan S."/>
            <person name="Shinozaki K."/>
            <person name="Davis R.W."/>
            <person name="Theologis A."/>
            <person name="Ecker J.R."/>
        </authorList>
    </citation>
    <scope>NUCLEOTIDE SEQUENCE [LARGE SCALE MRNA]</scope>
    <source>
        <strain>cv. Columbia</strain>
    </source>
</reference>
<reference key="5">
    <citation type="journal article" date="2004" name="EMBO J.">
        <title>Arabidopsis CYP86A2 represses Pseudomonas syringae type III genes and is required for cuticle development.</title>
        <authorList>
            <person name="Xiao F."/>
            <person name="Goodwin S.M."/>
            <person name="Xiao Y."/>
            <person name="Sun Z."/>
            <person name="Baker D."/>
            <person name="Tang X."/>
            <person name="Jenks M.A."/>
            <person name="Zhou J.M."/>
        </authorList>
    </citation>
    <scope>FUNCTION</scope>
    <scope>MUTAGENESIS OF ARG-309</scope>
    <scope>DISRUPTION PHENOTYPE</scope>
</reference>
<reference key="6">
    <citation type="journal article" date="2005" name="Plant Physiol.">
        <title>Differential expression and evolution of the Arabidopsis CYP86A subfamily.</title>
        <authorList>
            <person name="Duan H."/>
            <person name="Schuler M.A."/>
        </authorList>
    </citation>
    <scope>FUNCTION</scope>
    <scope>TISSUE SPECIFICITY</scope>
    <scope>INDUCTION</scope>
    <scope>GENE FAMILY</scope>
</reference>
<reference key="7">
    <citation type="journal article" date="2007" name="Proteins">
        <title>Molecular definitions of fatty acid hydroxylases in Arabidopsis thaliana.</title>
        <authorList>
            <person name="Rupasinghe S.G."/>
            <person name="Duan H."/>
            <person name="Schuler M.A."/>
        </authorList>
    </citation>
    <scope>FUNCTION</scope>
</reference>
<reference key="8">
    <citation type="journal article" date="2008" name="Plant J.">
        <title>Deposition and localization of lipid polyester in developing seeds of Brassica napus and Arabidopsis thaliana.</title>
        <authorList>
            <person name="Molina I."/>
            <person name="Ohlrogge J.B."/>
            <person name="Pollard M."/>
        </authorList>
    </citation>
    <scope>DEVELOPMENTAL STAGE</scope>
</reference>
<reference key="9">
    <citation type="journal article" date="2008" name="Plant Signal. Behav.">
        <title>Gene trap-based identification of a guard cell promoter in Arabidopsis.</title>
        <authorList>
            <person name="Francia P."/>
            <person name="Simoni L."/>
            <person name="Cominelli E."/>
            <person name="Tonelli C."/>
            <person name="Galbiati M."/>
        </authorList>
    </citation>
    <scope>TISSUE SPECIFICITY</scope>
    <scope>INDUCTION</scope>
</reference>
<keyword id="KW-0349">Heme</keyword>
<keyword id="KW-0408">Iron</keyword>
<keyword id="KW-0472">Membrane</keyword>
<keyword id="KW-0479">Metal-binding</keyword>
<keyword id="KW-0503">Monooxygenase</keyword>
<keyword id="KW-0560">Oxidoreductase</keyword>
<keyword id="KW-0611">Plant defense</keyword>
<keyword id="KW-1185">Reference proteome</keyword>
<keyword id="KW-0812">Transmembrane</keyword>
<keyword id="KW-1133">Transmembrane helix</keyword>
<evidence type="ECO:0000250" key="1"/>
<evidence type="ECO:0000255" key="2"/>
<evidence type="ECO:0000269" key="3">
    <source>
    </source>
</evidence>
<evidence type="ECO:0000269" key="4">
    <source>
    </source>
</evidence>
<evidence type="ECO:0000269" key="5">
    <source>
    </source>
</evidence>
<evidence type="ECO:0000269" key="6">
    <source>
    </source>
</evidence>
<evidence type="ECO:0000269" key="7">
    <source>
    </source>
</evidence>
<evidence type="ECO:0000305" key="8"/>
<name>C86A2_ARATH</name>
<dbReference type="EC" id="1.14.14.1"/>
<dbReference type="EMBL" id="AF013293">
    <property type="protein sequence ID" value="AAB62843.1"/>
    <property type="molecule type" value="Genomic_DNA"/>
</dbReference>
<dbReference type="EMBL" id="AF195115">
    <property type="protein sequence ID" value="AAF02801.1"/>
    <property type="molecule type" value="Genomic_DNA"/>
</dbReference>
<dbReference type="EMBL" id="AL161471">
    <property type="protein sequence ID" value="CAB80794.1"/>
    <property type="molecule type" value="Genomic_DNA"/>
</dbReference>
<dbReference type="EMBL" id="CP002687">
    <property type="protein sequence ID" value="AEE81869.1"/>
    <property type="molecule type" value="Genomic_DNA"/>
</dbReference>
<dbReference type="EMBL" id="AY074851">
    <property type="protein sequence ID" value="AAL75903.1"/>
    <property type="molecule type" value="mRNA"/>
</dbReference>
<dbReference type="EMBL" id="AY133539">
    <property type="protein sequence ID" value="AAM91369.1"/>
    <property type="molecule type" value="mRNA"/>
</dbReference>
<dbReference type="PIR" id="T01535">
    <property type="entry name" value="T01535"/>
</dbReference>
<dbReference type="RefSeq" id="NP_191946.1">
    <property type="nucleotide sequence ID" value="NM_116260.4"/>
</dbReference>
<dbReference type="SMR" id="O23066"/>
<dbReference type="BioGRID" id="13310">
    <property type="interactions" value="1"/>
</dbReference>
<dbReference type="FunCoup" id="O23066">
    <property type="interactions" value="261"/>
</dbReference>
<dbReference type="IntAct" id="O23066">
    <property type="interactions" value="1"/>
</dbReference>
<dbReference type="STRING" id="3702.O23066"/>
<dbReference type="PaxDb" id="3702-AT4G00360.1"/>
<dbReference type="ProteomicsDB" id="240536"/>
<dbReference type="EnsemblPlants" id="AT4G00360.1">
    <property type="protein sequence ID" value="AT4G00360.1"/>
    <property type="gene ID" value="AT4G00360"/>
</dbReference>
<dbReference type="GeneID" id="828019"/>
<dbReference type="Gramene" id="AT4G00360.1">
    <property type="protein sequence ID" value="AT4G00360.1"/>
    <property type="gene ID" value="AT4G00360"/>
</dbReference>
<dbReference type="KEGG" id="ath:AT4G00360"/>
<dbReference type="Araport" id="AT4G00360"/>
<dbReference type="TAIR" id="AT4G00360">
    <property type="gene designation" value="CYP86A2"/>
</dbReference>
<dbReference type="eggNOG" id="KOG0157">
    <property type="taxonomic scope" value="Eukaryota"/>
</dbReference>
<dbReference type="HOGENOM" id="CLU_001570_27_2_1"/>
<dbReference type="InParanoid" id="O23066"/>
<dbReference type="OMA" id="WCVQESL"/>
<dbReference type="OrthoDB" id="1470350at2759"/>
<dbReference type="PhylomeDB" id="O23066"/>
<dbReference type="BRENDA" id="1.14.14.80">
    <property type="organism ID" value="399"/>
</dbReference>
<dbReference type="PRO" id="PR:O23066"/>
<dbReference type="Proteomes" id="UP000006548">
    <property type="component" value="Chromosome 4"/>
</dbReference>
<dbReference type="ExpressionAtlas" id="O23066">
    <property type="expression patterns" value="baseline and differential"/>
</dbReference>
<dbReference type="GO" id="GO:0016020">
    <property type="term" value="C:membrane"/>
    <property type="evidence" value="ECO:0007669"/>
    <property type="project" value="UniProtKB-SubCell"/>
</dbReference>
<dbReference type="GO" id="GO:0018685">
    <property type="term" value="F:alkane 1-monooxygenase activity"/>
    <property type="evidence" value="ECO:0000314"/>
    <property type="project" value="TAIR"/>
</dbReference>
<dbReference type="GO" id="GO:0020037">
    <property type="term" value="F:heme binding"/>
    <property type="evidence" value="ECO:0007669"/>
    <property type="project" value="InterPro"/>
</dbReference>
<dbReference type="GO" id="GO:0005506">
    <property type="term" value="F:iron ion binding"/>
    <property type="evidence" value="ECO:0007669"/>
    <property type="project" value="InterPro"/>
</dbReference>
<dbReference type="GO" id="GO:0016712">
    <property type="term" value="F:oxidoreductase activity, acting on paired donors, with incorporation or reduction of molecular oxygen, reduced flavin or flavoprotein as one donor, and incorporation of one atom of oxygen"/>
    <property type="evidence" value="ECO:0007669"/>
    <property type="project" value="UniProtKB-EC"/>
</dbReference>
<dbReference type="GO" id="GO:0006952">
    <property type="term" value="P:defense response"/>
    <property type="evidence" value="ECO:0007669"/>
    <property type="project" value="UniProtKB-KW"/>
</dbReference>
<dbReference type="GO" id="GO:0006631">
    <property type="term" value="P:fatty acid metabolic process"/>
    <property type="evidence" value="ECO:0000314"/>
    <property type="project" value="TAIR"/>
</dbReference>
<dbReference type="CDD" id="cd11064">
    <property type="entry name" value="CYP86A"/>
    <property type="match status" value="1"/>
</dbReference>
<dbReference type="FunFam" id="1.10.630.10:FF:000044">
    <property type="entry name" value="Cytochrome P450"/>
    <property type="match status" value="1"/>
</dbReference>
<dbReference type="Gene3D" id="1.10.630.10">
    <property type="entry name" value="Cytochrome P450"/>
    <property type="match status" value="1"/>
</dbReference>
<dbReference type="InterPro" id="IPR001128">
    <property type="entry name" value="Cyt_P450"/>
</dbReference>
<dbReference type="InterPro" id="IPR017972">
    <property type="entry name" value="Cyt_P450_CS"/>
</dbReference>
<dbReference type="InterPro" id="IPR002401">
    <property type="entry name" value="Cyt_P450_E_grp-I"/>
</dbReference>
<dbReference type="InterPro" id="IPR036396">
    <property type="entry name" value="Cyt_P450_sf"/>
</dbReference>
<dbReference type="PANTHER" id="PTHR24296">
    <property type="entry name" value="CYTOCHROME P450"/>
    <property type="match status" value="1"/>
</dbReference>
<dbReference type="Pfam" id="PF00067">
    <property type="entry name" value="p450"/>
    <property type="match status" value="1"/>
</dbReference>
<dbReference type="PRINTS" id="PR00463">
    <property type="entry name" value="EP450I"/>
</dbReference>
<dbReference type="PRINTS" id="PR00385">
    <property type="entry name" value="P450"/>
</dbReference>
<dbReference type="SUPFAM" id="SSF48264">
    <property type="entry name" value="Cytochrome P450"/>
    <property type="match status" value="1"/>
</dbReference>
<dbReference type="PROSITE" id="PS00086">
    <property type="entry name" value="CYTOCHROME_P450"/>
    <property type="match status" value="1"/>
</dbReference>
<gene>
    <name type="primary">CYP86A2</name>
    <name type="synonym">ATT1</name>
    <name type="ordered locus">At4g00360</name>
    <name type="ORF">A_IG005I10.21</name>
    <name type="ORF">F5I10.21</name>
</gene>
<proteinExistence type="evidence at protein level"/>
<protein>
    <recommendedName>
        <fullName>Cytochrome P450 86A2</fullName>
        <ecNumber>1.14.14.1</ecNumber>
    </recommendedName>
    <alternativeName>
        <fullName>Protein ABERRANT INDUCTION OF TYPE THREE 1</fullName>
    </alternativeName>
</protein>